<comment type="function">
    <text evidence="1">One of the primary rRNA binding proteins, it binds directly to 16S rRNA where it helps nucleate assembly of the platform of the 30S subunit by binding and bridging several RNA helices of the 16S rRNA.</text>
</comment>
<comment type="function">
    <text evidence="1">Forms an intersubunit bridge (bridge B4) with the 23S rRNA of the 50S subunit in the ribosome.</text>
</comment>
<comment type="subunit">
    <text evidence="1">Part of the 30S ribosomal subunit. Forms a bridge to the 50S subunit in the 70S ribosome, contacting the 23S rRNA.</text>
</comment>
<comment type="similarity">
    <text evidence="1">Belongs to the universal ribosomal protein uS15 family.</text>
</comment>
<keyword id="KW-1185">Reference proteome</keyword>
<keyword id="KW-0687">Ribonucleoprotein</keyword>
<keyword id="KW-0689">Ribosomal protein</keyword>
<keyword id="KW-0694">RNA-binding</keyword>
<keyword id="KW-0699">rRNA-binding</keyword>
<feature type="chain" id="PRO_1000054789" description="Small ribosomal subunit protein uS15">
    <location>
        <begin position="1"/>
        <end position="89"/>
    </location>
</feature>
<protein>
    <recommendedName>
        <fullName evidence="1">Small ribosomal subunit protein uS15</fullName>
    </recommendedName>
    <alternativeName>
        <fullName evidence="2">30S ribosomal protein S15</fullName>
    </alternativeName>
</protein>
<gene>
    <name evidence="1" type="primary">rpsO</name>
    <name type="ordered locus">GbCGDNIH1_2352</name>
</gene>
<reference key="1">
    <citation type="journal article" date="2007" name="J. Bacteriol.">
        <title>Genome sequence analysis of the emerging human pathogenic acetic acid bacterium Granulibacter bethesdensis.</title>
        <authorList>
            <person name="Greenberg D.E."/>
            <person name="Porcella S.F."/>
            <person name="Zelazny A.M."/>
            <person name="Virtaneva K."/>
            <person name="Sturdevant D.E."/>
            <person name="Kupko J.J. III"/>
            <person name="Barbian K.D."/>
            <person name="Babar A."/>
            <person name="Dorward D.W."/>
            <person name="Holland S.M."/>
        </authorList>
    </citation>
    <scope>NUCLEOTIDE SEQUENCE [LARGE SCALE GENOMIC DNA]</scope>
    <source>
        <strain>ATCC BAA-1260 / CGDNIH1</strain>
    </source>
</reference>
<accession>Q0BPK2</accession>
<sequence length="89" mass="10201">MSITAERRTALISEYARAANDTGSPEVQIALLSERIANLTEHLKTHAKDFHSRRGLLMLVGQRRGLLDYLKRKEVARYDALIKRLGLRR</sequence>
<dbReference type="EMBL" id="CP000394">
    <property type="protein sequence ID" value="ABI63250.1"/>
    <property type="molecule type" value="Genomic_DNA"/>
</dbReference>
<dbReference type="RefSeq" id="WP_011633052.1">
    <property type="nucleotide sequence ID" value="NC_008343.2"/>
</dbReference>
<dbReference type="SMR" id="Q0BPK2"/>
<dbReference type="STRING" id="391165.GbCGDNIH1_2352"/>
<dbReference type="GeneID" id="69746536"/>
<dbReference type="KEGG" id="gbe:GbCGDNIH1_2352"/>
<dbReference type="eggNOG" id="COG0184">
    <property type="taxonomic scope" value="Bacteria"/>
</dbReference>
<dbReference type="HOGENOM" id="CLU_148518_0_0_5"/>
<dbReference type="OrthoDB" id="9799262at2"/>
<dbReference type="Proteomes" id="UP000001963">
    <property type="component" value="Chromosome"/>
</dbReference>
<dbReference type="GO" id="GO:0022627">
    <property type="term" value="C:cytosolic small ribosomal subunit"/>
    <property type="evidence" value="ECO:0007669"/>
    <property type="project" value="TreeGrafter"/>
</dbReference>
<dbReference type="GO" id="GO:0019843">
    <property type="term" value="F:rRNA binding"/>
    <property type="evidence" value="ECO:0007669"/>
    <property type="project" value="UniProtKB-UniRule"/>
</dbReference>
<dbReference type="GO" id="GO:0003735">
    <property type="term" value="F:structural constituent of ribosome"/>
    <property type="evidence" value="ECO:0007669"/>
    <property type="project" value="InterPro"/>
</dbReference>
<dbReference type="GO" id="GO:0006412">
    <property type="term" value="P:translation"/>
    <property type="evidence" value="ECO:0007669"/>
    <property type="project" value="UniProtKB-UniRule"/>
</dbReference>
<dbReference type="CDD" id="cd00353">
    <property type="entry name" value="Ribosomal_S15p_S13e"/>
    <property type="match status" value="1"/>
</dbReference>
<dbReference type="FunFam" id="1.10.287.10:FF:000002">
    <property type="entry name" value="30S ribosomal protein S15"/>
    <property type="match status" value="1"/>
</dbReference>
<dbReference type="Gene3D" id="6.10.250.3130">
    <property type="match status" value="1"/>
</dbReference>
<dbReference type="Gene3D" id="1.10.287.10">
    <property type="entry name" value="S15/NS1, RNA-binding"/>
    <property type="match status" value="1"/>
</dbReference>
<dbReference type="HAMAP" id="MF_01343_B">
    <property type="entry name" value="Ribosomal_uS15_B"/>
    <property type="match status" value="1"/>
</dbReference>
<dbReference type="InterPro" id="IPR000589">
    <property type="entry name" value="Ribosomal_uS15"/>
</dbReference>
<dbReference type="InterPro" id="IPR005290">
    <property type="entry name" value="Ribosomal_uS15_bac-type"/>
</dbReference>
<dbReference type="InterPro" id="IPR009068">
    <property type="entry name" value="uS15_NS1_RNA-bd_sf"/>
</dbReference>
<dbReference type="NCBIfam" id="TIGR00952">
    <property type="entry name" value="S15_bact"/>
    <property type="match status" value="1"/>
</dbReference>
<dbReference type="PANTHER" id="PTHR23321">
    <property type="entry name" value="RIBOSOMAL PROTEIN S15, BACTERIAL AND ORGANELLAR"/>
    <property type="match status" value="1"/>
</dbReference>
<dbReference type="PANTHER" id="PTHR23321:SF26">
    <property type="entry name" value="SMALL RIBOSOMAL SUBUNIT PROTEIN US15M"/>
    <property type="match status" value="1"/>
</dbReference>
<dbReference type="Pfam" id="PF00312">
    <property type="entry name" value="Ribosomal_S15"/>
    <property type="match status" value="1"/>
</dbReference>
<dbReference type="SMART" id="SM01387">
    <property type="entry name" value="Ribosomal_S15"/>
    <property type="match status" value="1"/>
</dbReference>
<dbReference type="SUPFAM" id="SSF47060">
    <property type="entry name" value="S15/NS1 RNA-binding domain"/>
    <property type="match status" value="1"/>
</dbReference>
<dbReference type="PROSITE" id="PS00362">
    <property type="entry name" value="RIBOSOMAL_S15"/>
    <property type="match status" value="1"/>
</dbReference>
<evidence type="ECO:0000255" key="1">
    <source>
        <dbReference type="HAMAP-Rule" id="MF_01343"/>
    </source>
</evidence>
<evidence type="ECO:0000305" key="2"/>
<proteinExistence type="inferred from homology"/>
<name>RS15_GRABC</name>
<organism>
    <name type="scientific">Granulibacter bethesdensis (strain ATCC BAA-1260 / CGDNIH1)</name>
    <dbReference type="NCBI Taxonomy" id="391165"/>
    <lineage>
        <taxon>Bacteria</taxon>
        <taxon>Pseudomonadati</taxon>
        <taxon>Pseudomonadota</taxon>
        <taxon>Alphaproteobacteria</taxon>
        <taxon>Acetobacterales</taxon>
        <taxon>Acetobacteraceae</taxon>
        <taxon>Granulibacter</taxon>
    </lineage>
</organism>